<organism>
    <name type="scientific">Pseudomonas aeruginosa (strain ATCC 15692 / DSM 22644 / CIP 104116 / JCM 14847 / LMG 12228 / 1C / PRS 101 / PAO1)</name>
    <dbReference type="NCBI Taxonomy" id="208964"/>
    <lineage>
        <taxon>Bacteria</taxon>
        <taxon>Pseudomonadati</taxon>
        <taxon>Pseudomonadota</taxon>
        <taxon>Gammaproteobacteria</taxon>
        <taxon>Pseudomonadales</taxon>
        <taxon>Pseudomonadaceae</taxon>
        <taxon>Pseudomonas</taxon>
    </lineage>
</organism>
<keyword id="KW-0032">Aminotransferase</keyword>
<keyword id="KW-0056">Arginine metabolism</keyword>
<keyword id="KW-0663">Pyridoxal phosphate</keyword>
<keyword id="KW-0670">Pyruvate</keyword>
<keyword id="KW-1185">Reference proteome</keyword>
<keyword id="KW-0808">Transferase</keyword>
<proteinExistence type="evidence at protein level"/>
<protein>
    <recommendedName>
        <fullName>Arginine--pyruvate transaminase AruH</fullName>
        <ecNumber>2.6.1.84</ecNumber>
    </recommendedName>
</protein>
<feature type="chain" id="PRO_0000418388" description="Arginine--pyruvate transaminase AruH">
    <location>
        <begin position="1"/>
        <end position="393"/>
    </location>
</feature>
<feature type="modified residue" description="N6-(pyridoxal phosphate)lysine" evidence="1">
    <location>
        <position position="237"/>
    </location>
</feature>
<name>ARUH_PSEAE</name>
<comment type="function">
    <text evidence="2">Catalyzes the conversion of L-arginine into 2-ketoarginine via transamination. L-arginine is the best substrate, but it can also use L-lysine, L-methionine, L-leucine, ornithine and L-glutamine, which indicates that it may have a broader physiological function in amino acid catabolism.</text>
</comment>
<comment type="catalytic activity">
    <reaction evidence="2">
        <text>L-arginine + pyruvate = 5-guanidino-2-oxopentanoate + L-alanine</text>
        <dbReference type="Rhea" id="RHEA:13833"/>
        <dbReference type="ChEBI" id="CHEBI:15361"/>
        <dbReference type="ChEBI" id="CHEBI:32682"/>
        <dbReference type="ChEBI" id="CHEBI:57972"/>
        <dbReference type="ChEBI" id="CHEBI:58489"/>
        <dbReference type="EC" id="2.6.1.84"/>
    </reaction>
</comment>
<comment type="cofactor">
    <cofactor evidence="2">
        <name>pyridoxal 5'-phosphate</name>
        <dbReference type="ChEBI" id="CHEBI:597326"/>
    </cofactor>
</comment>
<comment type="biophysicochemical properties">
    <kinetics>
        <KM evidence="2">1.6 mM for pyruvate</KM>
        <KM evidence="2">13.9 mM for L-arginine</KM>
        <Vmax evidence="2">54.6 umol/min/mg enzyme</Vmax>
        <text>kcat is 38.6 sec(-1).</text>
    </kinetics>
    <phDependence>
        <text evidence="2">Optimum pH is 9.0.</text>
    </phDependence>
    <temperatureDependence>
        <text evidence="2">Optimum temperature is 42 degrees Celsius.</text>
    </temperatureDependence>
</comment>
<comment type="pathway">
    <text evidence="2 3">Amino-acid degradation; L-arginine degradation.</text>
</comment>
<comment type="subunit">
    <text evidence="2">Homodimer.</text>
</comment>
<comment type="induction">
    <text evidence="3">Induced by L-arginine in the absence of ArgR, via the AruR/AruS two-component regulatory system.</text>
</comment>
<comment type="similarity">
    <text evidence="4">Belongs to the class-I pyridoxal-phosphate-dependent aminotransferase family.</text>
</comment>
<evidence type="ECO:0000250" key="1"/>
<evidence type="ECO:0000269" key="2">
    <source>
    </source>
</evidence>
<evidence type="ECO:0000269" key="3">
    <source>
    </source>
</evidence>
<evidence type="ECO:0000305" key="4"/>
<sequence length="393" mass="42380">MRYSDFTQRIAGDGAAAWDIHYRALARVEQGEEILLLSVGDPDFDTPAPIVQAAIDSLLAGNTHYADVRGKRALRQRIAERHRRRSGQAVDAEQVVVLAGAQCALYAVVQCLLNPGDEVIVAEPMYVTYEAVFGACGARVVPVPVRSENGFRVQAEEVAALITPRTRAMALNSPHNPSGASLPRATWEALAELCMAHDLWMISDEVYSELLFDGEHVSPASLPGMADRTATLNSLSKSHAMTGWRVGWVVGPAALCAHLENLALCMLYGSPEFIQDAACTALEAPLPELEAMREAYRRRRDLVIECLADSPGLRPLRPDGGMFVMVDIRPTGLSAQAFADRLLDRHGVSVLAGEAFGPSAAGHIRLGLVLGAEPLREACRRIALCAAELLGQA</sequence>
<gene>
    <name type="primary">aruH</name>
    <name type="ordered locus">PA4976</name>
</gene>
<dbReference type="EC" id="2.6.1.84"/>
<dbReference type="EMBL" id="AE004091">
    <property type="protein sequence ID" value="AAG08361.1"/>
    <property type="molecule type" value="Genomic_DNA"/>
</dbReference>
<dbReference type="PIR" id="F83024">
    <property type="entry name" value="F83024"/>
</dbReference>
<dbReference type="RefSeq" id="NP_253663.1">
    <property type="nucleotide sequence ID" value="NC_002516.2"/>
</dbReference>
<dbReference type="RefSeq" id="WP_003102073.1">
    <property type="nucleotide sequence ID" value="NZ_QZGE01000002.1"/>
</dbReference>
<dbReference type="SMR" id="Q9HUI9"/>
<dbReference type="STRING" id="208964.PA4976"/>
<dbReference type="PaxDb" id="208964-PA4976"/>
<dbReference type="GeneID" id="880915"/>
<dbReference type="KEGG" id="pae:PA4976"/>
<dbReference type="PATRIC" id="fig|208964.12.peg.5212"/>
<dbReference type="PseudoCAP" id="PA4976"/>
<dbReference type="HOGENOM" id="CLU_017584_4_0_6"/>
<dbReference type="InParanoid" id="Q9HUI9"/>
<dbReference type="OrthoDB" id="9803354at2"/>
<dbReference type="PhylomeDB" id="Q9HUI9"/>
<dbReference type="BioCyc" id="MetaCyc:MONOMER-13583"/>
<dbReference type="BioCyc" id="PAER208964:G1FZ6-5092-MONOMER"/>
<dbReference type="BRENDA" id="2.6.1.84">
    <property type="organism ID" value="5087"/>
</dbReference>
<dbReference type="UniPathway" id="UPA00073"/>
<dbReference type="Proteomes" id="UP000002438">
    <property type="component" value="Chromosome"/>
</dbReference>
<dbReference type="GO" id="GO:0030170">
    <property type="term" value="F:pyridoxal phosphate binding"/>
    <property type="evidence" value="ECO:0000314"/>
    <property type="project" value="UniProtKB"/>
</dbReference>
<dbReference type="GO" id="GO:0008483">
    <property type="term" value="F:transaminase activity"/>
    <property type="evidence" value="ECO:0000314"/>
    <property type="project" value="UniProtKB"/>
</dbReference>
<dbReference type="GO" id="GO:0006527">
    <property type="term" value="P:arginine catabolic process"/>
    <property type="evidence" value="ECO:0000314"/>
    <property type="project" value="PseudoCAP"/>
</dbReference>
<dbReference type="GO" id="GO:0019545">
    <property type="term" value="P:arginine catabolic process to succinate"/>
    <property type="evidence" value="ECO:0000315"/>
    <property type="project" value="UniProtKB"/>
</dbReference>
<dbReference type="GO" id="GO:0009058">
    <property type="term" value="P:biosynthetic process"/>
    <property type="evidence" value="ECO:0007669"/>
    <property type="project" value="InterPro"/>
</dbReference>
<dbReference type="CDD" id="cd00609">
    <property type="entry name" value="AAT_like"/>
    <property type="match status" value="1"/>
</dbReference>
<dbReference type="FunFam" id="3.40.640.10:FF:000033">
    <property type="entry name" value="Aspartate aminotransferase"/>
    <property type="match status" value="1"/>
</dbReference>
<dbReference type="Gene3D" id="3.90.1150.10">
    <property type="entry name" value="Aspartate Aminotransferase, domain 1"/>
    <property type="match status" value="1"/>
</dbReference>
<dbReference type="Gene3D" id="3.40.640.10">
    <property type="entry name" value="Type I PLP-dependent aspartate aminotransferase-like (Major domain)"/>
    <property type="match status" value="1"/>
</dbReference>
<dbReference type="InterPro" id="IPR004839">
    <property type="entry name" value="Aminotransferase_I/II_large"/>
</dbReference>
<dbReference type="InterPro" id="IPR050596">
    <property type="entry name" value="AspAT/PAT-like"/>
</dbReference>
<dbReference type="InterPro" id="IPR004838">
    <property type="entry name" value="NHTrfase_class1_PyrdxlP-BS"/>
</dbReference>
<dbReference type="InterPro" id="IPR015424">
    <property type="entry name" value="PyrdxlP-dep_Trfase"/>
</dbReference>
<dbReference type="InterPro" id="IPR015421">
    <property type="entry name" value="PyrdxlP-dep_Trfase_major"/>
</dbReference>
<dbReference type="InterPro" id="IPR015422">
    <property type="entry name" value="PyrdxlP-dep_Trfase_small"/>
</dbReference>
<dbReference type="PANTHER" id="PTHR46383">
    <property type="entry name" value="ASPARTATE AMINOTRANSFERASE"/>
    <property type="match status" value="1"/>
</dbReference>
<dbReference type="PANTHER" id="PTHR46383:SF1">
    <property type="entry name" value="ASPARTATE AMINOTRANSFERASE"/>
    <property type="match status" value="1"/>
</dbReference>
<dbReference type="Pfam" id="PF00155">
    <property type="entry name" value="Aminotran_1_2"/>
    <property type="match status" value="1"/>
</dbReference>
<dbReference type="SUPFAM" id="SSF53383">
    <property type="entry name" value="PLP-dependent transferases"/>
    <property type="match status" value="1"/>
</dbReference>
<dbReference type="PROSITE" id="PS00105">
    <property type="entry name" value="AA_TRANSFER_CLASS_1"/>
    <property type="match status" value="1"/>
</dbReference>
<accession>Q9HUI9</accession>
<reference key="1">
    <citation type="journal article" date="2000" name="Nature">
        <title>Complete genome sequence of Pseudomonas aeruginosa PAO1, an opportunistic pathogen.</title>
        <authorList>
            <person name="Stover C.K."/>
            <person name="Pham X.-Q.T."/>
            <person name="Erwin A.L."/>
            <person name="Mizoguchi S.D."/>
            <person name="Warrener P."/>
            <person name="Hickey M.J."/>
            <person name="Brinkman F.S.L."/>
            <person name="Hufnagle W.O."/>
            <person name="Kowalik D.J."/>
            <person name="Lagrou M."/>
            <person name="Garber R.L."/>
            <person name="Goltry L."/>
            <person name="Tolentino E."/>
            <person name="Westbrock-Wadman S."/>
            <person name="Yuan Y."/>
            <person name="Brody L.L."/>
            <person name="Coulter S.N."/>
            <person name="Folger K.R."/>
            <person name="Kas A."/>
            <person name="Larbig K."/>
            <person name="Lim R.M."/>
            <person name="Smith K.A."/>
            <person name="Spencer D.H."/>
            <person name="Wong G.K.-S."/>
            <person name="Wu Z."/>
            <person name="Paulsen I.T."/>
            <person name="Reizer J."/>
            <person name="Saier M.H. Jr."/>
            <person name="Hancock R.E.W."/>
            <person name="Lory S."/>
            <person name="Olson M.V."/>
        </authorList>
    </citation>
    <scope>NUCLEOTIDE SEQUENCE [LARGE SCALE GENOMIC DNA]</scope>
    <source>
        <strain>ATCC 15692 / DSM 22644 / CIP 104116 / JCM 14847 / LMG 12228 / 1C / PRS 101 / PAO1</strain>
    </source>
</reference>
<reference key="2">
    <citation type="journal article" date="2007" name="J. Bacteriol.">
        <title>Functional genomics enables identification of genes of the arginine transaminase pathway in Pseudomonas aeruginosa.</title>
        <authorList>
            <person name="Yang Z."/>
            <person name="Lu C.D."/>
        </authorList>
    </citation>
    <scope>PATHWAY</scope>
    <scope>INDUCTION</scope>
    <scope>GENE NAME</scope>
    <source>
        <strain>ATCC 15692 / DSM 22644 / CIP 104116 / JCM 14847 / LMG 12228 / 1C / PRS 101 / PAO1</strain>
    </source>
</reference>
<reference key="3">
    <citation type="journal article" date="2007" name="J. Bacteriol.">
        <title>Characterization of an arginine:pyruvate transaminase in arginine catabolism of Pseudomonas aeruginosa PAO1.</title>
        <authorList>
            <person name="Yang Z."/>
            <person name="Lu C.D."/>
        </authorList>
    </citation>
    <scope>FUNCTION</scope>
    <scope>CATALYTIC ACTIVITY</scope>
    <scope>COFACTOR</scope>
    <scope>BIOPHYSICOCHEMICAL PROPERTIES</scope>
    <scope>PATHWAY</scope>
    <scope>SUBUNIT</scope>
    <source>
        <strain>ATCC 15692 / DSM 22644 / CIP 104116 / JCM 14847 / LMG 12228 / 1C / PRS 101 / PAO1</strain>
    </source>
</reference>